<sequence>MPEKRLTAEPPTITEEEFEDSLATDDFLVDYFNEFLSLPTFSEAIRFNADYGVFEVANDAPQFLEKQLKKILQNQQPRNPIYDVVRKGKNEVKPVQMNAPDEDETINVNYNIMCLSREEGIKWIKKERLPAFLESDCYFEYRLAKLVSQVRWSKSGMNFTVGSNFSPWIVKKPPSLPPPATEEDNLVIMKKFYVSLGEASYTQTKDWFALAKQSQQTVSTFSLPCCVPYNKLKSPAISSVSENFIFDDGVHPRTKKDPSKTNKLISEFEEEEGEEEEVSVSLQDTPSQALLRVYLEKKQDVDESLTMHFSTCEEFLSSYIYFILRGAIQQIVGKPVGETPDYINFNNITKVSFDDCFESIHGKNFLSELVQTTKERSEEIEQTSLSSKNESAGPESRADWCISHRTYDIGNRKEFERFKKFIKGTLGERYWWLWMDIERLKVLKDPGRHQRHLEKMKKCYLVSNGDYYLSAEILSKFKLLDGSQWNEEHLRNIQSEVLKPLLLYWAPRFCVTHSASTKYASAELKFWHLRQAKPRKDIDPFPQMATLLPLRPKSCIPQIPEIQKEEFSLSQPPKSPNKSPEVKTATQKPWKRELLYPGSSKDDVIEKGSKYMSESSKVIHLTSFTDISECLKPQLDRRYAYTEEPRVKTVSDVGALGGSDMENLLQSLYVENRAGFFFTKFCEHSGNKLWKNSVYFWFDLQAYHQLFYQETLQPFKVCKQAQYLFATYVAPSATLDIGLQQEKKKEIYMKIQPPFEDLFDTAEEYILLLLLEPWTKMVKSDQIAYKKVELVEETRQLDSTYFRKLQALHKETFSKKAEDTTCEIGTGILSLSNVSKRTEYWDNVPAEYKHFKFSDLLNNKLEFEHFRQFLETHSSSMDLMCWTDIEQFRRITYRDRNQRKAKSIYIKNKYLNKKYFFGPNSPASLYQQNQVMHLSGGWGKILHEQLDAPVLVEIQKHVQNRLENVWLPLFLASEQFAARQKIKVQMKDIAEELLLQKAEKKIGVWKPVESKWISSSCKIIAFRKALLNPVTSRQFQRFVALKGDLLENGLLFWQEVQKYKDLCHSHCDESVIQKKITTIINCFINSSIPPALQIDIPVEQAQKIIEHRKELGPYVFREAQMTIFGVLFKFWPQFCEFRKNLTDENIMSVLERRQEYNKQKKKLAVLEDEKSGKDGIKQYANTSVPAIKTALLSDSFLGLQPYGRQPTWCYSKYIEALEQERILLKIQEELEKKLFAGLQPLTNFKASSSTMSLKKNMSAHSSQK</sequence>
<accession>Q8NE09</accession>
<accession>A8K944</accession>
<accession>Q569L2</accession>
<accession>Q86Y71</accession>
<accession>Q9BYZ4</accession>
<accession>Q9UFN6</accession>
<comment type="function">
    <text evidence="1">Inhibits signal transduction by increasing the GTPase activity of G protein alpha subunits thereby driving them into their inactive GDP-bound form.</text>
</comment>
<comment type="subunit">
    <text evidence="5">Interacts with GNA11, GNA12 and GNA13.</text>
</comment>
<comment type="subcellular location">
    <subcellularLocation>
        <location evidence="5">Cytoplasm</location>
    </subcellularLocation>
    <subcellularLocation>
        <location evidence="5">Nucleus</location>
    </subcellularLocation>
    <text>Expressed in the cytoplasm of spermatogonia and spermatocytes. In spermatids, also expressed in the nucleus.</text>
</comment>
<comment type="alternative products">
    <event type="alternative splicing"/>
    <isoform>
        <id>Q8NE09-1</id>
        <name>1</name>
        <sequence type="displayed"/>
    </isoform>
    <isoform>
        <id>Q8NE09-2</id>
        <name>2</name>
        <sequence type="described" ref="VSP_022306"/>
    </isoform>
    <isoform>
        <id>Q8NE09-3</id>
        <name>3</name>
        <sequence type="described" ref="VSP_054225"/>
    </isoform>
</comment>
<comment type="tissue specificity">
    <text evidence="5">Testis-specific. Expressed in Leydig cells and spermatogenic cells from the spermatogonia to spermatid stages (at protein level).</text>
</comment>
<comment type="miscellaneous">
    <molecule>Isoform 2</molecule>
    <text evidence="9">May be produced at very low levels due to a premature stop codon in the mRNA, leading to nonsense-mediated mRNA decay.</text>
</comment>
<comment type="miscellaneous">
    <molecule>Isoform 3</molecule>
    <text evidence="9">May be due to competing donor splice site.</text>
</comment>
<comment type="sequence caution" evidence="9">
    <conflict type="frameshift">
        <sequence resource="EMBL-CDS" id="AAG49397"/>
    </conflict>
</comment>
<reference key="1">
    <citation type="journal article" date="2008" name="Biol. Reprod.">
        <title>RGS22, a novel testis-specific regulator of G-protein signaling involved in human and mouse spermiogenesis along with GNA12/13 subunits.</title>
        <authorList>
            <person name="Hu Y."/>
            <person name="Xing J."/>
            <person name="Chen L."/>
            <person name="Guo X."/>
            <person name="Du Y."/>
            <person name="Zhao C."/>
            <person name="Zhu Y."/>
            <person name="Lin M."/>
            <person name="Zhou Z."/>
            <person name="Sha J."/>
        </authorList>
    </citation>
    <scope>NUCLEOTIDE SEQUENCE [MRNA] (ISOFORM 3)</scope>
    <scope>INTERACTION WITH GNA11; GNA12 AND GNA13</scope>
    <scope>SUBCELLULAR LOCATION</scope>
    <scope>TISSUE SPECIFICITY</scope>
    <source>
        <tissue>Testis</tissue>
    </source>
</reference>
<reference key="2">
    <citation type="journal article" date="2004" name="Nat. Genet.">
        <title>Complete sequencing and characterization of 21,243 full-length human cDNAs.</title>
        <authorList>
            <person name="Ota T."/>
            <person name="Suzuki Y."/>
            <person name="Nishikawa T."/>
            <person name="Otsuki T."/>
            <person name="Sugiyama T."/>
            <person name="Irie R."/>
            <person name="Wakamatsu A."/>
            <person name="Hayashi K."/>
            <person name="Sato H."/>
            <person name="Nagai K."/>
            <person name="Kimura K."/>
            <person name="Makita H."/>
            <person name="Sekine M."/>
            <person name="Obayashi M."/>
            <person name="Nishi T."/>
            <person name="Shibahara T."/>
            <person name="Tanaka T."/>
            <person name="Ishii S."/>
            <person name="Yamamoto J."/>
            <person name="Saito K."/>
            <person name="Kawai Y."/>
            <person name="Isono Y."/>
            <person name="Nakamura Y."/>
            <person name="Nagahari K."/>
            <person name="Murakami K."/>
            <person name="Yasuda T."/>
            <person name="Iwayanagi T."/>
            <person name="Wagatsuma M."/>
            <person name="Shiratori A."/>
            <person name="Sudo H."/>
            <person name="Hosoiri T."/>
            <person name="Kaku Y."/>
            <person name="Kodaira H."/>
            <person name="Kondo H."/>
            <person name="Sugawara M."/>
            <person name="Takahashi M."/>
            <person name="Kanda K."/>
            <person name="Yokoi T."/>
            <person name="Furuya T."/>
            <person name="Kikkawa E."/>
            <person name="Omura Y."/>
            <person name="Abe K."/>
            <person name="Kamihara K."/>
            <person name="Katsuta N."/>
            <person name="Sato K."/>
            <person name="Tanikawa M."/>
            <person name="Yamazaki M."/>
            <person name="Ninomiya K."/>
            <person name="Ishibashi T."/>
            <person name="Yamashita H."/>
            <person name="Murakawa K."/>
            <person name="Fujimori K."/>
            <person name="Tanai H."/>
            <person name="Kimata M."/>
            <person name="Watanabe M."/>
            <person name="Hiraoka S."/>
            <person name="Chiba Y."/>
            <person name="Ishida S."/>
            <person name="Ono Y."/>
            <person name="Takiguchi S."/>
            <person name="Watanabe S."/>
            <person name="Yosida M."/>
            <person name="Hotuta T."/>
            <person name="Kusano J."/>
            <person name="Kanehori K."/>
            <person name="Takahashi-Fujii A."/>
            <person name="Hara H."/>
            <person name="Tanase T.-O."/>
            <person name="Nomura Y."/>
            <person name="Togiya S."/>
            <person name="Komai F."/>
            <person name="Hara R."/>
            <person name="Takeuchi K."/>
            <person name="Arita M."/>
            <person name="Imose N."/>
            <person name="Musashino K."/>
            <person name="Yuuki H."/>
            <person name="Oshima A."/>
            <person name="Sasaki N."/>
            <person name="Aotsuka S."/>
            <person name="Yoshikawa Y."/>
            <person name="Matsunawa H."/>
            <person name="Ichihara T."/>
            <person name="Shiohata N."/>
            <person name="Sano S."/>
            <person name="Moriya S."/>
            <person name="Momiyama H."/>
            <person name="Satoh N."/>
            <person name="Takami S."/>
            <person name="Terashima Y."/>
            <person name="Suzuki O."/>
            <person name="Nakagawa S."/>
            <person name="Senoh A."/>
            <person name="Mizoguchi H."/>
            <person name="Goto Y."/>
            <person name="Shimizu F."/>
            <person name="Wakebe H."/>
            <person name="Hishigaki H."/>
            <person name="Watanabe T."/>
            <person name="Sugiyama A."/>
            <person name="Takemoto M."/>
            <person name="Kawakami B."/>
            <person name="Yamazaki M."/>
            <person name="Watanabe K."/>
            <person name="Kumagai A."/>
            <person name="Itakura S."/>
            <person name="Fukuzumi Y."/>
            <person name="Fujimori Y."/>
            <person name="Komiyama M."/>
            <person name="Tashiro H."/>
            <person name="Tanigami A."/>
            <person name="Fujiwara T."/>
            <person name="Ono T."/>
            <person name="Yamada K."/>
            <person name="Fujii Y."/>
            <person name="Ozaki K."/>
            <person name="Hirao M."/>
            <person name="Ohmori Y."/>
            <person name="Kawabata A."/>
            <person name="Hikiji T."/>
            <person name="Kobatake N."/>
            <person name="Inagaki H."/>
            <person name="Ikema Y."/>
            <person name="Okamoto S."/>
            <person name="Okitani R."/>
            <person name="Kawakami T."/>
            <person name="Noguchi S."/>
            <person name="Itoh T."/>
            <person name="Shigeta K."/>
            <person name="Senba T."/>
            <person name="Matsumura K."/>
            <person name="Nakajima Y."/>
            <person name="Mizuno T."/>
            <person name="Morinaga M."/>
            <person name="Sasaki M."/>
            <person name="Togashi T."/>
            <person name="Oyama M."/>
            <person name="Hata H."/>
            <person name="Watanabe M."/>
            <person name="Komatsu T."/>
            <person name="Mizushima-Sugano J."/>
            <person name="Satoh T."/>
            <person name="Shirai Y."/>
            <person name="Takahashi Y."/>
            <person name="Nakagawa K."/>
            <person name="Okumura K."/>
            <person name="Nagase T."/>
            <person name="Nomura N."/>
            <person name="Kikuchi H."/>
            <person name="Masuho Y."/>
            <person name="Yamashita R."/>
            <person name="Nakai K."/>
            <person name="Yada T."/>
            <person name="Nakamura Y."/>
            <person name="Ohara O."/>
            <person name="Isogai T."/>
            <person name="Sugano S."/>
        </authorList>
    </citation>
    <scope>NUCLEOTIDE SEQUENCE [LARGE SCALE MRNA] (ISOFORM 3)</scope>
    <source>
        <tissue>Testis</tissue>
    </source>
</reference>
<reference key="3">
    <citation type="journal article" date="2006" name="Nature">
        <title>DNA sequence and analysis of human chromosome 8.</title>
        <authorList>
            <person name="Nusbaum C."/>
            <person name="Mikkelsen T.S."/>
            <person name="Zody M.C."/>
            <person name="Asakawa S."/>
            <person name="Taudien S."/>
            <person name="Garber M."/>
            <person name="Kodira C.D."/>
            <person name="Schueler M.G."/>
            <person name="Shimizu A."/>
            <person name="Whittaker C.A."/>
            <person name="Chang J.L."/>
            <person name="Cuomo C.A."/>
            <person name="Dewar K."/>
            <person name="FitzGerald M.G."/>
            <person name="Yang X."/>
            <person name="Allen N.R."/>
            <person name="Anderson S."/>
            <person name="Asakawa T."/>
            <person name="Blechschmidt K."/>
            <person name="Bloom T."/>
            <person name="Borowsky M.L."/>
            <person name="Butler J."/>
            <person name="Cook A."/>
            <person name="Corum B."/>
            <person name="DeArellano K."/>
            <person name="DeCaprio D."/>
            <person name="Dooley K.T."/>
            <person name="Dorris L. III"/>
            <person name="Engels R."/>
            <person name="Gloeckner G."/>
            <person name="Hafez N."/>
            <person name="Hagopian D.S."/>
            <person name="Hall J.L."/>
            <person name="Ishikawa S.K."/>
            <person name="Jaffe D.B."/>
            <person name="Kamat A."/>
            <person name="Kudoh J."/>
            <person name="Lehmann R."/>
            <person name="Lokitsang T."/>
            <person name="Macdonald P."/>
            <person name="Major J.E."/>
            <person name="Matthews C.D."/>
            <person name="Mauceli E."/>
            <person name="Menzel U."/>
            <person name="Mihalev A.H."/>
            <person name="Minoshima S."/>
            <person name="Murayama Y."/>
            <person name="Naylor J.W."/>
            <person name="Nicol R."/>
            <person name="Nguyen C."/>
            <person name="O'Leary S.B."/>
            <person name="O'Neill K."/>
            <person name="Parker S.C.J."/>
            <person name="Polley A."/>
            <person name="Raymond C.K."/>
            <person name="Reichwald K."/>
            <person name="Rodriguez J."/>
            <person name="Sasaki T."/>
            <person name="Schilhabel M."/>
            <person name="Siddiqui R."/>
            <person name="Smith C.L."/>
            <person name="Sneddon T.P."/>
            <person name="Talamas J.A."/>
            <person name="Tenzin P."/>
            <person name="Topham K."/>
            <person name="Venkataraman V."/>
            <person name="Wen G."/>
            <person name="Yamazaki S."/>
            <person name="Young S.K."/>
            <person name="Zeng Q."/>
            <person name="Zimmer A.R."/>
            <person name="Rosenthal A."/>
            <person name="Birren B.W."/>
            <person name="Platzer M."/>
            <person name="Shimizu N."/>
            <person name="Lander E.S."/>
        </authorList>
    </citation>
    <scope>NUCLEOTIDE SEQUENCE [LARGE SCALE GENOMIC DNA]</scope>
</reference>
<reference key="4">
    <citation type="submission" date="2005-07" db="EMBL/GenBank/DDBJ databases">
        <authorList>
            <person name="Mural R.J."/>
            <person name="Istrail S."/>
            <person name="Sutton G.G."/>
            <person name="Florea L."/>
            <person name="Halpern A.L."/>
            <person name="Mobarry C.M."/>
            <person name="Lippert R."/>
            <person name="Walenz B."/>
            <person name="Shatkay H."/>
            <person name="Dew I."/>
            <person name="Miller J.R."/>
            <person name="Flanigan M.J."/>
            <person name="Edwards N.J."/>
            <person name="Bolanos R."/>
            <person name="Fasulo D."/>
            <person name="Halldorsson B.V."/>
            <person name="Hannenhalli S."/>
            <person name="Turner R."/>
            <person name="Yooseph S."/>
            <person name="Lu F."/>
            <person name="Nusskern D.R."/>
            <person name="Shue B.C."/>
            <person name="Zheng X.H."/>
            <person name="Zhong F."/>
            <person name="Delcher A.L."/>
            <person name="Huson D.H."/>
            <person name="Kravitz S.A."/>
            <person name="Mouchard L."/>
            <person name="Reinert K."/>
            <person name="Remington K.A."/>
            <person name="Clark A.G."/>
            <person name="Waterman M.S."/>
            <person name="Eichler E.E."/>
            <person name="Adams M.D."/>
            <person name="Hunkapiller M.W."/>
            <person name="Myers E.W."/>
            <person name="Venter J.C."/>
        </authorList>
    </citation>
    <scope>NUCLEOTIDE SEQUENCE [LARGE SCALE GENOMIC DNA]</scope>
</reference>
<reference key="5">
    <citation type="journal article" date="2004" name="Genome Res.">
        <title>The status, quality, and expansion of the NIH full-length cDNA project: the Mammalian Gene Collection (MGC).</title>
        <authorList>
            <consortium name="The MGC Project Team"/>
        </authorList>
    </citation>
    <scope>NUCLEOTIDE SEQUENCE [LARGE SCALE MRNA] (ISOFORMS 1 AND 2)</scope>
    <source>
        <tissue>Testis</tissue>
    </source>
</reference>
<reference key="6">
    <citation type="journal article" date="2007" name="BMC Genomics">
        <title>The full-ORF clone resource of the German cDNA consortium.</title>
        <authorList>
            <person name="Bechtel S."/>
            <person name="Rosenfelder H."/>
            <person name="Duda A."/>
            <person name="Schmidt C.P."/>
            <person name="Ernst U."/>
            <person name="Wellenreuther R."/>
            <person name="Mehrle A."/>
            <person name="Schuster C."/>
            <person name="Bahr A."/>
            <person name="Bloecker H."/>
            <person name="Heubner D."/>
            <person name="Hoerlein A."/>
            <person name="Michel G."/>
            <person name="Wedler H."/>
            <person name="Koehrer K."/>
            <person name="Ottenwaelder B."/>
            <person name="Poustka A."/>
            <person name="Wiemann S."/>
            <person name="Schupp I."/>
        </authorList>
    </citation>
    <scope>NUCLEOTIDE SEQUENCE [LARGE SCALE MRNA] OF 995-1264 (ISOFORM 1)</scope>
    <source>
        <tissue>Testis</tissue>
    </source>
</reference>
<evidence type="ECO:0000250" key="1"/>
<evidence type="ECO:0000255" key="2"/>
<evidence type="ECO:0000255" key="3">
    <source>
        <dbReference type="PROSITE-ProRule" id="PRU00171"/>
    </source>
</evidence>
<evidence type="ECO:0000256" key="4">
    <source>
        <dbReference type="SAM" id="MobiDB-lite"/>
    </source>
</evidence>
<evidence type="ECO:0000269" key="5">
    <source>
    </source>
</evidence>
<evidence type="ECO:0000303" key="6">
    <source>
    </source>
</evidence>
<evidence type="ECO:0000303" key="7">
    <source>
    </source>
</evidence>
<evidence type="ECO:0000303" key="8">
    <source>
    </source>
</evidence>
<evidence type="ECO:0000305" key="9"/>
<feature type="chain" id="PRO_0000271376" description="Regulator of G-protein signaling 22">
    <location>
        <begin position="1"/>
        <end position="1264"/>
    </location>
</feature>
<feature type="domain" description="RGS 1" evidence="3">
    <location>
        <begin position="852"/>
        <end position="980"/>
    </location>
</feature>
<feature type="domain" description="RGS 2" evidence="3">
    <location>
        <begin position="1021"/>
        <end position="1145"/>
    </location>
</feature>
<feature type="region of interest" description="Disordered" evidence="4">
    <location>
        <begin position="565"/>
        <end position="587"/>
    </location>
</feature>
<feature type="coiled-coil region" evidence="2">
    <location>
        <begin position="1142"/>
        <end position="1174"/>
    </location>
</feature>
<feature type="compositionally biased region" description="Polar residues" evidence="4">
    <location>
        <begin position="568"/>
        <end position="578"/>
    </location>
</feature>
<feature type="splice variant" id="VSP_054225" description="In isoform 3." evidence="6 8">
    <location>
        <begin position="187"/>
        <end position="198"/>
    </location>
</feature>
<feature type="splice variant" id="VSP_022306" description="In isoform 2." evidence="7">
    <location>
        <begin position="505"/>
        <end position="1264"/>
    </location>
</feature>
<feature type="sequence variant" id="VAR_051797" description="In dbSNP:rs2446927.">
    <original>R</original>
    <variation>M</variation>
    <location>
        <position position="397"/>
    </location>
</feature>
<feature type="sequence variant" id="VAR_051798" description="In dbSNP:rs3133711.">
    <original>H</original>
    <variation>Y</variation>
    <location>
        <position position="943"/>
    </location>
</feature>
<feature type="sequence conflict" description="In Ref. 5; AAH92411." evidence="9" ref="5">
    <location>
        <position position="86"/>
    </location>
</feature>
<feature type="sequence conflict" description="In Ref. 5; AAH47060." evidence="9" ref="5">
    <original>A</original>
    <variation>P</variation>
    <location>
        <position position="131"/>
    </location>
</feature>
<feature type="sequence conflict" description="In Ref. 1; AAG49397." evidence="9" ref="1">
    <original>P</original>
    <variation>S</variation>
    <location>
        <position position="167"/>
    </location>
</feature>
<feature type="sequence conflict" description="In Ref. 5; AAH36665." evidence="9" ref="5">
    <original>E</original>
    <variation>K</variation>
    <location>
        <position position="378"/>
    </location>
</feature>
<feature type="sequence conflict" description="In Ref. 1; AAG49397." evidence="9" ref="1">
    <original>K</original>
    <variation>R</variation>
    <location>
        <position position="423"/>
    </location>
</feature>
<feature type="sequence conflict" description="In Ref. 1; AAG49397." evidence="9" ref="1">
    <original>N</original>
    <variation>D</variation>
    <location>
        <position position="692"/>
    </location>
</feature>
<feature type="sequence conflict" description="In Ref. 6; CAB55986." evidence="9" ref="6">
    <original>LQK</original>
    <variation>DAW</variation>
    <location>
        <begin position="995"/>
        <end position="997"/>
    </location>
</feature>
<feature type="sequence conflict" description="In Ref. 1; AAG49397." evidence="9" ref="1">
    <original>S</original>
    <variation>T</variation>
    <location>
        <position position="1070"/>
    </location>
</feature>
<feature type="sequence conflict" description="In Ref. 6; CAB55986." evidence="9" ref="6">
    <original>K</original>
    <variation>KK</variation>
    <location>
        <position position="1233"/>
    </location>
</feature>
<keyword id="KW-0025">Alternative splicing</keyword>
<keyword id="KW-0175">Coiled coil</keyword>
<keyword id="KW-0963">Cytoplasm</keyword>
<keyword id="KW-0539">Nucleus</keyword>
<keyword id="KW-1267">Proteomics identification</keyword>
<keyword id="KW-1185">Reference proteome</keyword>
<keyword id="KW-0677">Repeat</keyword>
<keyword id="KW-0734">Signal transduction inhibitor</keyword>
<organism>
    <name type="scientific">Homo sapiens</name>
    <name type="common">Human</name>
    <dbReference type="NCBI Taxonomy" id="9606"/>
    <lineage>
        <taxon>Eukaryota</taxon>
        <taxon>Metazoa</taxon>
        <taxon>Chordata</taxon>
        <taxon>Craniata</taxon>
        <taxon>Vertebrata</taxon>
        <taxon>Euteleostomi</taxon>
        <taxon>Mammalia</taxon>
        <taxon>Eutheria</taxon>
        <taxon>Euarchontoglires</taxon>
        <taxon>Primates</taxon>
        <taxon>Haplorrhini</taxon>
        <taxon>Catarrhini</taxon>
        <taxon>Hominidae</taxon>
        <taxon>Homo</taxon>
    </lineage>
</organism>
<protein>
    <recommendedName>
        <fullName>Regulator of G-protein signaling 22</fullName>
        <shortName>RGS22</shortName>
    </recommendedName>
</protein>
<dbReference type="EMBL" id="AY009106">
    <property type="protein sequence ID" value="AAG49397.1"/>
    <property type="status" value="ALT_FRAME"/>
    <property type="molecule type" value="mRNA"/>
</dbReference>
<dbReference type="EMBL" id="AK292559">
    <property type="protein sequence ID" value="BAF85248.1"/>
    <property type="molecule type" value="mRNA"/>
</dbReference>
<dbReference type="EMBL" id="AC021590">
    <property type="status" value="NOT_ANNOTATED_CDS"/>
    <property type="molecule type" value="Genomic_DNA"/>
</dbReference>
<dbReference type="EMBL" id="AP005356">
    <property type="status" value="NOT_ANNOTATED_CDS"/>
    <property type="molecule type" value="Genomic_DNA"/>
</dbReference>
<dbReference type="EMBL" id="CH471060">
    <property type="protein sequence ID" value="EAW91794.1"/>
    <property type="molecule type" value="Genomic_DNA"/>
</dbReference>
<dbReference type="EMBL" id="BC036665">
    <property type="protein sequence ID" value="AAH36665.2"/>
    <property type="molecule type" value="mRNA"/>
</dbReference>
<dbReference type="EMBL" id="BC047060">
    <property type="protein sequence ID" value="AAH47060.1"/>
    <property type="molecule type" value="mRNA"/>
</dbReference>
<dbReference type="EMBL" id="BC092411">
    <property type="protein sequence ID" value="AAH92411.1"/>
    <property type="molecule type" value="mRNA"/>
</dbReference>
<dbReference type="EMBL" id="AL117544">
    <property type="protein sequence ID" value="CAB55986.2"/>
    <property type="molecule type" value="mRNA"/>
</dbReference>
<dbReference type="CCDS" id="CCDS43758.1">
    <molecule id="Q8NE09-1"/>
</dbReference>
<dbReference type="CCDS" id="CCDS69521.1">
    <molecule id="Q8NE09-3"/>
</dbReference>
<dbReference type="PIR" id="T17296">
    <property type="entry name" value="T17296"/>
</dbReference>
<dbReference type="RefSeq" id="NP_001273621.1">
    <molecule id="Q8NE09-3"/>
    <property type="nucleotide sequence ID" value="NM_001286692.2"/>
</dbReference>
<dbReference type="RefSeq" id="NP_056483.3">
    <molecule id="Q8NE09-1"/>
    <property type="nucleotide sequence ID" value="NM_015668.5"/>
</dbReference>
<dbReference type="SMR" id="Q8NE09"/>
<dbReference type="BioGRID" id="117592">
    <property type="interactions" value="4"/>
</dbReference>
<dbReference type="FunCoup" id="Q8NE09">
    <property type="interactions" value="919"/>
</dbReference>
<dbReference type="IntAct" id="Q8NE09">
    <property type="interactions" value="1"/>
</dbReference>
<dbReference type="STRING" id="9606.ENSP00000354109"/>
<dbReference type="iPTMnet" id="Q8NE09"/>
<dbReference type="PhosphoSitePlus" id="Q8NE09"/>
<dbReference type="BioMuta" id="RGS22"/>
<dbReference type="DMDM" id="122064954"/>
<dbReference type="jPOST" id="Q8NE09"/>
<dbReference type="MassIVE" id="Q8NE09"/>
<dbReference type="PaxDb" id="9606-ENSP00000354109"/>
<dbReference type="PeptideAtlas" id="Q8NE09"/>
<dbReference type="ProteomicsDB" id="1891"/>
<dbReference type="ProteomicsDB" id="73111">
    <molecule id="Q8NE09-1"/>
</dbReference>
<dbReference type="ProteomicsDB" id="73112">
    <molecule id="Q8NE09-2"/>
</dbReference>
<dbReference type="Antibodypedia" id="6845">
    <property type="antibodies" value="150 antibodies from 28 providers"/>
</dbReference>
<dbReference type="DNASU" id="26166"/>
<dbReference type="Ensembl" id="ENST00000360863.11">
    <molecule id="Q8NE09-1"/>
    <property type="protein sequence ID" value="ENSP00000354109.6"/>
    <property type="gene ID" value="ENSG00000132554.21"/>
</dbReference>
<dbReference type="Ensembl" id="ENST00000519725.5">
    <molecule id="Q8NE09-2"/>
    <property type="protein sequence ID" value="ENSP00000427798.1"/>
    <property type="gene ID" value="ENSG00000132554.21"/>
</dbReference>
<dbReference type="Ensembl" id="ENST00000523437.5">
    <molecule id="Q8NE09-3"/>
    <property type="protein sequence ID" value="ENSP00000428212.1"/>
    <property type="gene ID" value="ENSG00000132554.21"/>
</dbReference>
<dbReference type="GeneID" id="26166"/>
<dbReference type="KEGG" id="hsa:26166"/>
<dbReference type="MANE-Select" id="ENST00000360863.11">
    <property type="protein sequence ID" value="ENSP00000354109.6"/>
    <property type="RefSeq nucleotide sequence ID" value="NM_015668.5"/>
    <property type="RefSeq protein sequence ID" value="NP_056483.3"/>
</dbReference>
<dbReference type="UCSC" id="uc003yjb.2">
    <molecule id="Q8NE09-1"/>
    <property type="organism name" value="human"/>
</dbReference>
<dbReference type="AGR" id="HGNC:24499"/>
<dbReference type="CTD" id="26166"/>
<dbReference type="DisGeNET" id="26166"/>
<dbReference type="GeneCards" id="RGS22"/>
<dbReference type="HGNC" id="HGNC:24499">
    <property type="gene designation" value="RGS22"/>
</dbReference>
<dbReference type="HPA" id="ENSG00000132554">
    <property type="expression patterns" value="Tissue enriched (testis)"/>
</dbReference>
<dbReference type="MIM" id="615650">
    <property type="type" value="gene"/>
</dbReference>
<dbReference type="neXtProt" id="NX_Q8NE09"/>
<dbReference type="OpenTargets" id="ENSG00000132554"/>
<dbReference type="PharmGKB" id="PA142671068"/>
<dbReference type="VEuPathDB" id="HostDB:ENSG00000132554"/>
<dbReference type="eggNOG" id="ENOG502QU18">
    <property type="taxonomic scope" value="Eukaryota"/>
</dbReference>
<dbReference type="GeneTree" id="ENSGT00500000044936"/>
<dbReference type="HOGENOM" id="CLU_005031_0_0_1"/>
<dbReference type="InParanoid" id="Q8NE09"/>
<dbReference type="OMA" id="LMRSWYL"/>
<dbReference type="OrthoDB" id="10013157at2759"/>
<dbReference type="PAN-GO" id="Q8NE09">
    <property type="GO annotations" value="3 GO annotations based on evolutionary models"/>
</dbReference>
<dbReference type="PhylomeDB" id="Q8NE09"/>
<dbReference type="TreeFam" id="TF329128"/>
<dbReference type="PathwayCommons" id="Q8NE09"/>
<dbReference type="Reactome" id="R-HSA-418594">
    <property type="pathway name" value="G alpha (i) signalling events"/>
</dbReference>
<dbReference type="SignaLink" id="Q8NE09"/>
<dbReference type="BioGRID-ORCS" id="26166">
    <property type="hits" value="10 hits in 1140 CRISPR screens"/>
</dbReference>
<dbReference type="ChiTaRS" id="RGS22">
    <property type="organism name" value="human"/>
</dbReference>
<dbReference type="GenomeRNAi" id="26166"/>
<dbReference type="Pharos" id="Q8NE09">
    <property type="development level" value="Tbio"/>
</dbReference>
<dbReference type="PRO" id="PR:Q8NE09"/>
<dbReference type="Proteomes" id="UP000005640">
    <property type="component" value="Chromosome 8"/>
</dbReference>
<dbReference type="RNAct" id="Q8NE09">
    <property type="molecule type" value="protein"/>
</dbReference>
<dbReference type="Bgee" id="ENSG00000132554">
    <property type="expression patterns" value="Expressed in sperm and 118 other cell types or tissues"/>
</dbReference>
<dbReference type="ExpressionAtlas" id="Q8NE09">
    <property type="expression patterns" value="baseline and differential"/>
</dbReference>
<dbReference type="GO" id="GO:0015629">
    <property type="term" value="C:actin cytoskeleton"/>
    <property type="evidence" value="ECO:0000314"/>
    <property type="project" value="HPA"/>
</dbReference>
<dbReference type="GO" id="GO:0005737">
    <property type="term" value="C:cytoplasm"/>
    <property type="evidence" value="ECO:0000314"/>
    <property type="project" value="UniProtKB"/>
</dbReference>
<dbReference type="GO" id="GO:0005829">
    <property type="term" value="C:cytosol"/>
    <property type="evidence" value="ECO:0000314"/>
    <property type="project" value="HPA"/>
</dbReference>
<dbReference type="GO" id="GO:0001650">
    <property type="term" value="C:fibrillar center"/>
    <property type="evidence" value="ECO:0000314"/>
    <property type="project" value="HPA"/>
</dbReference>
<dbReference type="GO" id="GO:0005634">
    <property type="term" value="C:nucleus"/>
    <property type="evidence" value="ECO:0000314"/>
    <property type="project" value="UniProtKB"/>
</dbReference>
<dbReference type="GO" id="GO:0001965">
    <property type="term" value="F:G-protein alpha-subunit binding"/>
    <property type="evidence" value="ECO:0000353"/>
    <property type="project" value="UniProtKB"/>
</dbReference>
<dbReference type="GO" id="GO:0009968">
    <property type="term" value="P:negative regulation of signal transduction"/>
    <property type="evidence" value="ECO:0007669"/>
    <property type="project" value="UniProtKB-KW"/>
</dbReference>
<dbReference type="CDD" id="cd08727">
    <property type="entry name" value="RGS_RGS22_2"/>
    <property type="match status" value="1"/>
</dbReference>
<dbReference type="CDD" id="cd08726">
    <property type="entry name" value="RGS_RGS22_3"/>
    <property type="match status" value="1"/>
</dbReference>
<dbReference type="CDD" id="cd08725">
    <property type="entry name" value="RGS_RGS22_4"/>
    <property type="match status" value="1"/>
</dbReference>
<dbReference type="FunFam" id="1.10.167.10:FF:000011">
    <property type="entry name" value="Regulator of G protein signaling 22"/>
    <property type="match status" value="1"/>
</dbReference>
<dbReference type="FunFam" id="1.10.167.10:FF:000016">
    <property type="entry name" value="Regulator of G protein signaling 22"/>
    <property type="match status" value="1"/>
</dbReference>
<dbReference type="FunFam" id="1.10.167.10:FF:000020">
    <property type="entry name" value="Regulator of G protein signaling 22"/>
    <property type="match status" value="1"/>
</dbReference>
<dbReference type="Gene3D" id="1.10.167.10">
    <property type="entry name" value="Regulator of G-protein Signalling 4, domain 2"/>
    <property type="match status" value="3"/>
</dbReference>
<dbReference type="InterPro" id="IPR016137">
    <property type="entry name" value="RGS"/>
</dbReference>
<dbReference type="InterPro" id="IPR042651">
    <property type="entry name" value="Rgs22"/>
</dbReference>
<dbReference type="InterPro" id="IPR048074">
    <property type="entry name" value="RGS22_RGS_fourth"/>
</dbReference>
<dbReference type="InterPro" id="IPR048075">
    <property type="entry name" value="RGS22_RGS_second"/>
</dbReference>
<dbReference type="InterPro" id="IPR048073">
    <property type="entry name" value="RGS22_RGS_third"/>
</dbReference>
<dbReference type="InterPro" id="IPR036305">
    <property type="entry name" value="RGS_sf"/>
</dbReference>
<dbReference type="InterPro" id="IPR044926">
    <property type="entry name" value="RGS_subdomain_2"/>
</dbReference>
<dbReference type="PANTHER" id="PTHR46583">
    <property type="entry name" value="REGULATOR OF G-PROTEIN SIGNALING 22"/>
    <property type="match status" value="1"/>
</dbReference>
<dbReference type="PANTHER" id="PTHR46583:SF1">
    <property type="entry name" value="REGULATOR OF G-PROTEIN SIGNALING 22"/>
    <property type="match status" value="1"/>
</dbReference>
<dbReference type="Pfam" id="PF00615">
    <property type="entry name" value="RGS"/>
    <property type="match status" value="3"/>
</dbReference>
<dbReference type="SMART" id="SM00315">
    <property type="entry name" value="RGS"/>
    <property type="match status" value="2"/>
</dbReference>
<dbReference type="SUPFAM" id="SSF48097">
    <property type="entry name" value="Regulator of G-protein signaling, RGS"/>
    <property type="match status" value="4"/>
</dbReference>
<dbReference type="PROSITE" id="PS50132">
    <property type="entry name" value="RGS"/>
    <property type="match status" value="2"/>
</dbReference>
<proteinExistence type="evidence at protein level"/>
<gene>
    <name type="primary">RGS22</name>
</gene>
<name>RGS22_HUMAN</name>